<evidence type="ECO:0000250" key="1"/>
<evidence type="ECO:0000255" key="2"/>
<evidence type="ECO:0000255" key="3">
    <source>
        <dbReference type="PROSITE-ProRule" id="PRU00283"/>
    </source>
</evidence>
<evidence type="ECO:0000256" key="4">
    <source>
        <dbReference type="SAM" id="MobiDB-lite"/>
    </source>
</evidence>
<reference key="1">
    <citation type="submission" date="2001-05" db="EMBL/GenBank/DDBJ databases">
        <title>Identification of kinesin-related proteins in the filamentous fungus Ashbya gossypii.</title>
        <authorList>
            <person name="Alberti-Segui C."/>
            <person name="Dietrich F.S."/>
            <person name="Philippsen P."/>
        </authorList>
    </citation>
    <scope>NUCLEOTIDE SEQUENCE [GENOMIC DNA]</scope>
</reference>
<reference key="2">
    <citation type="journal article" date="2004" name="Science">
        <title>The Ashbya gossypii genome as a tool for mapping the ancient Saccharomyces cerevisiae genome.</title>
        <authorList>
            <person name="Dietrich F.S."/>
            <person name="Voegeli S."/>
            <person name="Brachat S."/>
            <person name="Lerch A."/>
            <person name="Gates K."/>
            <person name="Steiner S."/>
            <person name="Mohr C."/>
            <person name="Poehlmann R."/>
            <person name="Luedi P."/>
            <person name="Choi S."/>
            <person name="Wing R.A."/>
            <person name="Flavier A."/>
            <person name="Gaffney T.D."/>
            <person name="Philippsen P."/>
        </authorList>
    </citation>
    <scope>NUCLEOTIDE SEQUENCE [LARGE SCALE GENOMIC DNA]</scope>
    <source>
        <strain>ATCC 10895 / CBS 109.51 / FGSC 9923 / NRRL Y-1056</strain>
    </source>
</reference>
<reference key="3">
    <citation type="journal article" date="2013" name="G3 (Bethesda)">
        <title>Genomes of Ashbya fungi isolated from insects reveal four mating-type loci, numerous translocations, lack of transposons, and distinct gene duplications.</title>
        <authorList>
            <person name="Dietrich F.S."/>
            <person name="Voegeli S."/>
            <person name="Kuo S."/>
            <person name="Philippsen P."/>
        </authorList>
    </citation>
    <scope>GENOME REANNOTATION</scope>
    <source>
        <strain>ATCC 10895 / CBS 109.51 / FGSC 9923 / NRRL Y-1056</strain>
    </source>
</reference>
<protein>
    <recommendedName>
        <fullName>Kinesin-like protein KIP1</fullName>
    </recommendedName>
</protein>
<organism>
    <name type="scientific">Eremothecium gossypii (strain ATCC 10895 / CBS 109.51 / FGSC 9923 / NRRL Y-1056)</name>
    <name type="common">Yeast</name>
    <name type="synonym">Ashbya gossypii</name>
    <dbReference type="NCBI Taxonomy" id="284811"/>
    <lineage>
        <taxon>Eukaryota</taxon>
        <taxon>Fungi</taxon>
        <taxon>Dikarya</taxon>
        <taxon>Ascomycota</taxon>
        <taxon>Saccharomycotina</taxon>
        <taxon>Saccharomycetes</taxon>
        <taxon>Saccharomycetales</taxon>
        <taxon>Saccharomycetaceae</taxon>
        <taxon>Eremothecium</taxon>
    </lineage>
</organism>
<keyword id="KW-0067">ATP-binding</keyword>
<keyword id="KW-0131">Cell cycle</keyword>
<keyword id="KW-0132">Cell division</keyword>
<keyword id="KW-0175">Coiled coil</keyword>
<keyword id="KW-0963">Cytoplasm</keyword>
<keyword id="KW-0206">Cytoskeleton</keyword>
<keyword id="KW-0493">Microtubule</keyword>
<keyword id="KW-0498">Mitosis</keyword>
<keyword id="KW-0505">Motor protein</keyword>
<keyword id="KW-0547">Nucleotide-binding</keyword>
<keyword id="KW-1185">Reference proteome</keyword>
<accession>Q8J1G4</accession>
<gene>
    <name type="primary">KIP1</name>
    <name type="ordered locus">ACR228C</name>
</gene>
<proteinExistence type="inferred from homology"/>
<name>KIP1_EREGS</name>
<feature type="chain" id="PRO_0000125368" description="Kinesin-like protein KIP1">
    <location>
        <begin position="1"/>
        <end position="1129"/>
    </location>
</feature>
<feature type="domain" description="Kinesin motor" evidence="3">
    <location>
        <begin position="54"/>
        <end position="417"/>
    </location>
</feature>
<feature type="region of interest" description="Disordered" evidence="4">
    <location>
        <begin position="1"/>
        <end position="49"/>
    </location>
</feature>
<feature type="coiled-coil region" evidence="2">
    <location>
        <begin position="422"/>
        <end position="513"/>
    </location>
</feature>
<feature type="coiled-coil region" evidence="2">
    <location>
        <begin position="681"/>
        <end position="765"/>
    </location>
</feature>
<feature type="coiled-coil region" evidence="2">
    <location>
        <begin position="919"/>
        <end position="948"/>
    </location>
</feature>
<feature type="compositionally biased region" description="Polar residues" evidence="4">
    <location>
        <begin position="11"/>
        <end position="21"/>
    </location>
</feature>
<feature type="compositionally biased region" description="Polar residues" evidence="4">
    <location>
        <begin position="28"/>
        <end position="48"/>
    </location>
</feature>
<feature type="binding site" evidence="3">
    <location>
        <begin position="139"/>
        <end position="146"/>
    </location>
    <ligand>
        <name>ATP</name>
        <dbReference type="ChEBI" id="CHEBI:30616"/>
    </ligand>
</feature>
<dbReference type="EMBL" id="AF378569">
    <property type="protein sequence ID" value="AAN87137.1"/>
    <property type="molecule type" value="Genomic_DNA"/>
</dbReference>
<dbReference type="EMBL" id="AE016816">
    <property type="protein sequence ID" value="AAS51454.1"/>
    <property type="molecule type" value="Genomic_DNA"/>
</dbReference>
<dbReference type="RefSeq" id="NP_983630.1">
    <property type="nucleotide sequence ID" value="NM_208983.1"/>
</dbReference>
<dbReference type="SMR" id="Q8J1G4"/>
<dbReference type="FunCoup" id="Q8J1G4">
    <property type="interactions" value="1095"/>
</dbReference>
<dbReference type="STRING" id="284811.Q8J1G4"/>
<dbReference type="EnsemblFungi" id="AAS51454">
    <property type="protein sequence ID" value="AAS51454"/>
    <property type="gene ID" value="AGOS_ACR228C"/>
</dbReference>
<dbReference type="GeneID" id="4619762"/>
<dbReference type="KEGG" id="ago:AGOS_ACR228C"/>
<dbReference type="eggNOG" id="KOG0243">
    <property type="taxonomic scope" value="Eukaryota"/>
</dbReference>
<dbReference type="HOGENOM" id="CLU_001485_33_2_1"/>
<dbReference type="InParanoid" id="Q8J1G4"/>
<dbReference type="OMA" id="GMEEMYI"/>
<dbReference type="OrthoDB" id="3176171at2759"/>
<dbReference type="Proteomes" id="UP000000591">
    <property type="component" value="Chromosome III"/>
</dbReference>
<dbReference type="GO" id="GO:0005737">
    <property type="term" value="C:cytoplasm"/>
    <property type="evidence" value="ECO:0007669"/>
    <property type="project" value="UniProtKB-KW"/>
</dbReference>
<dbReference type="GO" id="GO:0072686">
    <property type="term" value="C:mitotic spindle"/>
    <property type="evidence" value="ECO:0000318"/>
    <property type="project" value="GO_Central"/>
</dbReference>
<dbReference type="GO" id="GO:0005634">
    <property type="term" value="C:nucleus"/>
    <property type="evidence" value="ECO:0000318"/>
    <property type="project" value="GO_Central"/>
</dbReference>
<dbReference type="GO" id="GO:0005876">
    <property type="term" value="C:spindle microtubule"/>
    <property type="evidence" value="ECO:0000318"/>
    <property type="project" value="GO_Central"/>
</dbReference>
<dbReference type="GO" id="GO:0005524">
    <property type="term" value="F:ATP binding"/>
    <property type="evidence" value="ECO:0007669"/>
    <property type="project" value="UniProtKB-KW"/>
</dbReference>
<dbReference type="GO" id="GO:0008017">
    <property type="term" value="F:microtubule binding"/>
    <property type="evidence" value="ECO:0007669"/>
    <property type="project" value="InterPro"/>
</dbReference>
<dbReference type="GO" id="GO:0008574">
    <property type="term" value="F:plus-end-directed microtubule motor activity"/>
    <property type="evidence" value="ECO:0000318"/>
    <property type="project" value="GO_Central"/>
</dbReference>
<dbReference type="GO" id="GO:0030543">
    <property type="term" value="P:2-micrometer plasmid partitioning"/>
    <property type="evidence" value="ECO:0007669"/>
    <property type="project" value="EnsemblFungi"/>
</dbReference>
<dbReference type="GO" id="GO:0051301">
    <property type="term" value="P:cell division"/>
    <property type="evidence" value="ECO:0007669"/>
    <property type="project" value="UniProtKB-KW"/>
</dbReference>
<dbReference type="GO" id="GO:0000073">
    <property type="term" value="P:initial mitotic spindle pole body separation"/>
    <property type="evidence" value="ECO:0000318"/>
    <property type="project" value="GO_Central"/>
</dbReference>
<dbReference type="GO" id="GO:0007019">
    <property type="term" value="P:microtubule depolymerization"/>
    <property type="evidence" value="ECO:0007669"/>
    <property type="project" value="EnsemblFungi"/>
</dbReference>
<dbReference type="GO" id="GO:0007018">
    <property type="term" value="P:microtubule-based movement"/>
    <property type="evidence" value="ECO:0007669"/>
    <property type="project" value="InterPro"/>
</dbReference>
<dbReference type="GO" id="GO:0090307">
    <property type="term" value="P:mitotic spindle assembly"/>
    <property type="evidence" value="ECO:0000318"/>
    <property type="project" value="GO_Central"/>
</dbReference>
<dbReference type="GO" id="GO:0051231">
    <property type="term" value="P:spindle elongation"/>
    <property type="evidence" value="ECO:0000318"/>
    <property type="project" value="GO_Central"/>
</dbReference>
<dbReference type="CDD" id="cd01364">
    <property type="entry name" value="KISc_BimC_Eg5"/>
    <property type="match status" value="1"/>
</dbReference>
<dbReference type="FunFam" id="3.40.850.10:FF:000051">
    <property type="entry name" value="Kinesin-like protein bimC"/>
    <property type="match status" value="1"/>
</dbReference>
<dbReference type="Gene3D" id="1.20.120.20">
    <property type="entry name" value="Apolipoprotein"/>
    <property type="match status" value="1"/>
</dbReference>
<dbReference type="Gene3D" id="3.40.850.10">
    <property type="entry name" value="Kinesin motor domain"/>
    <property type="match status" value="1"/>
</dbReference>
<dbReference type="InterPro" id="IPR047149">
    <property type="entry name" value="KIF11-like"/>
</dbReference>
<dbReference type="InterPro" id="IPR047241">
    <property type="entry name" value="KIF11-like_kin_motor_dom"/>
</dbReference>
<dbReference type="InterPro" id="IPR019821">
    <property type="entry name" value="Kinesin_motor_CS"/>
</dbReference>
<dbReference type="InterPro" id="IPR001752">
    <property type="entry name" value="Kinesin_motor_dom"/>
</dbReference>
<dbReference type="InterPro" id="IPR036961">
    <property type="entry name" value="Kinesin_motor_dom_sf"/>
</dbReference>
<dbReference type="InterPro" id="IPR027417">
    <property type="entry name" value="P-loop_NTPase"/>
</dbReference>
<dbReference type="PANTHER" id="PTHR47970">
    <property type="entry name" value="KINESIN-LIKE PROTEIN KIF11"/>
    <property type="match status" value="1"/>
</dbReference>
<dbReference type="PANTHER" id="PTHR47970:SF19">
    <property type="entry name" value="KINESIN-LIKE PROTEIN KIP1"/>
    <property type="match status" value="1"/>
</dbReference>
<dbReference type="Pfam" id="PF00225">
    <property type="entry name" value="Kinesin"/>
    <property type="match status" value="1"/>
</dbReference>
<dbReference type="PRINTS" id="PR00380">
    <property type="entry name" value="KINESINHEAVY"/>
</dbReference>
<dbReference type="SMART" id="SM00129">
    <property type="entry name" value="KISc"/>
    <property type="match status" value="1"/>
</dbReference>
<dbReference type="SUPFAM" id="SSF52540">
    <property type="entry name" value="P-loop containing nucleoside triphosphate hydrolases"/>
    <property type="match status" value="1"/>
</dbReference>
<dbReference type="PROSITE" id="PS00411">
    <property type="entry name" value="KINESIN_MOTOR_1"/>
    <property type="match status" value="1"/>
</dbReference>
<dbReference type="PROSITE" id="PS50067">
    <property type="entry name" value="KINESIN_MOTOR_2"/>
    <property type="match status" value="1"/>
</dbReference>
<sequence length="1129" mass="127690">MLEQAEKLMKRNSSGAMSAPQSKPLARSRSSTMPTTTQKRVRSSQQSEGEPEYNIKVYVRCRSRNEREIREKSSVVISTLGNNGREVILTNPGTGSNKTYTFDRVFGVESDQESMFNQVARAYINEMIEGYNCTVFAYGQTGTGKTYTMSGDITMMGSSEDDPNFVLLSEHAGIIPRVLVELFRELREVSEDYSVKVSFLELYNEKLRDLLVDDKDVSLEDHNFNGMAPPESIRIYDSLKTDRTSPNGYSIFVKGMEEMYIRSAQEGLKLLMDGSLKRKVAATKCNDLSSRSHTIFTITTNVTKIHPISGEQYVKVGKLNLVDLAGSENINRSGAENKRAQEAGLINKSLLTLGRVINALVDHSQHIPYRESKLTRLLQDSLGGKTKTCIIATISPAKISMEETVSTLEYATRAKSIKNTPQVNQLMAKESCIIEYIQEIERLRKELRASHSKEGIYITQEKFETYESNSILVEEQQAKIDNLQEQLRRLKEKFLEQTKLIKEKDGQIKELDVANRKYLEQSKDLTIYINGIHSKLEDYEHTMIGIHNNNMKLLEDINDNRGNIHEDLLAKVDHIETCNLIISREITSLISIRNVLQAYSDRFKTVLGGVFEELQEKLTQVGRTTEESQLDVDLSFVDEKFEEVTDIIKATCENLVRTMDEHVSNMKLETTDLTSSCASLLEKECQALHGKLQKYVESMKQELNSTLQEMVRDLDMKASSMLNVVQCTKDGLISHKKELEADLESQKREHFDIAQTMEEQLQKIVGKERQNIQESMKASYDFLMKQMVETELRQKNFEESIVSKVKGLLSHSNNGMSKMSSYAVGRLYDSAIGGVNSIENTVSSATFSMKNDLQEFQMDISPICDSRRFGDEFTAVETRISEAIREELTPKLQDITSKACNLIGLGVQDINQKALGVSDDQRRELRSVINNTNNHADRLRSEIGTLVNYVSQEHRDNIMQISQTQDEILQEQIASIGRTFDVLGNINKPDANVRTSVPIEHELNSAINELPPLYMPQRPLSLCSHGRQLLDEAYSGNENLSPSTGKFSNFPTPCGDMSAQTPTTPMPVPDQPLTKMPVPQTISSLRSLRRLTMDICEHSADMTLGSIHESQKAMDSSRRYTLEPRLFEK</sequence>
<comment type="function">
    <text evidence="1">Required for assembly of the mitotic spindle. Interacts with spindle microtubules to produce an outwardly directed force acting upon the poles. Following spindle assembly, CIN8 and KIP1 apparently act to oppose a force that draws separated poles back together. This force seems to be mediate by KAR3 (By similarity).</text>
</comment>
<comment type="subcellular location">
    <subcellularLocation>
        <location evidence="1">Cytoplasm</location>
        <location evidence="1">Cytoskeleton</location>
        <location evidence="1">Spindle</location>
    </subcellularLocation>
    <text evidence="1">Spindle microtubules that lie between the poles.</text>
</comment>
<comment type="similarity">
    <text evidence="3">Belongs to the TRAFAC class myosin-kinesin ATPase superfamily. Kinesin family. BimC subfamily.</text>
</comment>